<dbReference type="EMBL" id="CP001390">
    <property type="protein sequence ID" value="ACM19471.1"/>
    <property type="molecule type" value="Genomic_DNA"/>
</dbReference>
<dbReference type="RefSeq" id="WP_012646200.1">
    <property type="nucleotide sequence ID" value="NC_011979.1"/>
</dbReference>
<dbReference type="SMR" id="B9M361"/>
<dbReference type="STRING" id="316067.Geob_1111"/>
<dbReference type="KEGG" id="geo:Geob_1111"/>
<dbReference type="eggNOG" id="COG1641">
    <property type="taxonomic scope" value="Bacteria"/>
</dbReference>
<dbReference type="HOGENOM" id="CLU_028523_2_1_7"/>
<dbReference type="OrthoDB" id="9765625at2"/>
<dbReference type="Proteomes" id="UP000007721">
    <property type="component" value="Chromosome"/>
</dbReference>
<dbReference type="GO" id="GO:0016829">
    <property type="term" value="F:lyase activity"/>
    <property type="evidence" value="ECO:0007669"/>
    <property type="project" value="UniProtKB-UniRule"/>
</dbReference>
<dbReference type="GO" id="GO:0016151">
    <property type="term" value="F:nickel cation binding"/>
    <property type="evidence" value="ECO:0007669"/>
    <property type="project" value="UniProtKB-UniRule"/>
</dbReference>
<dbReference type="Gene3D" id="3.10.20.300">
    <property type="entry name" value="mk0293 like domain"/>
    <property type="match status" value="1"/>
</dbReference>
<dbReference type="Gene3D" id="3.30.70.1380">
    <property type="entry name" value="Transcriptional regulatory protein pf0864 domain like"/>
    <property type="match status" value="1"/>
</dbReference>
<dbReference type="HAMAP" id="MF_01074">
    <property type="entry name" value="LarC"/>
    <property type="match status" value="1"/>
</dbReference>
<dbReference type="InterPro" id="IPR002822">
    <property type="entry name" value="Ni_insertion"/>
</dbReference>
<dbReference type="NCBIfam" id="TIGR00299">
    <property type="entry name" value="nickel pincer cofactor biosynthesis protein LarC"/>
    <property type="match status" value="1"/>
</dbReference>
<dbReference type="PANTHER" id="PTHR36566">
    <property type="entry name" value="NICKEL INSERTION PROTEIN-RELATED"/>
    <property type="match status" value="1"/>
</dbReference>
<dbReference type="PANTHER" id="PTHR36566:SF1">
    <property type="entry name" value="PYRIDINIUM-3,5-BISTHIOCARBOXYLIC ACID MONONUCLEOTIDE NICKEL INSERTION PROTEIN"/>
    <property type="match status" value="1"/>
</dbReference>
<dbReference type="Pfam" id="PF01969">
    <property type="entry name" value="Ni_insertion"/>
    <property type="match status" value="1"/>
</dbReference>
<organism>
    <name type="scientific">Geotalea daltonii (strain DSM 22248 / JCM 15807 / FRC-32)</name>
    <name type="common">Geobacter daltonii</name>
    <dbReference type="NCBI Taxonomy" id="316067"/>
    <lineage>
        <taxon>Bacteria</taxon>
        <taxon>Pseudomonadati</taxon>
        <taxon>Thermodesulfobacteriota</taxon>
        <taxon>Desulfuromonadia</taxon>
        <taxon>Geobacterales</taxon>
        <taxon>Geobacteraceae</taxon>
        <taxon>Geotalea</taxon>
    </lineage>
</organism>
<accession>B9M361</accession>
<comment type="similarity">
    <text evidence="1">Belongs to the LarC family.</text>
</comment>
<sequence>MKVLFFDCFAGIAGDMTVAAMVELGLPLEHLRRELARLGLPASTYELAVEPVRRKGVAASHFEVRVEQDQPHRHYADIAAMIDGSSLAATVKDKAQRIFRRIAEAEAKVHGMEIGHVHFHEVGAVDSIIDIVGAAIGLDYLGIEAVYVSPLPLGSGYIETAHGRLPVPAPATAELLKGLPVHGNIGSGERVTPTGAAIVAALGTAFGSHPPMEIRSIGYGAGSKDFADMPNLLRLVLGETAETLQRDEIVVLETNIDDMNPELLGFLMERLFEKGALDVTFSPLQMKKNRPGTLVTVITPCAKRDELARLILSESTAIGVRYYPAQRLILSRTVEERLTSLGPVKVKVVTDDALLRRVVPEFEECRRLTAEKGLPLMDVYRIVEREVAGT</sequence>
<evidence type="ECO:0000255" key="1">
    <source>
        <dbReference type="HAMAP-Rule" id="MF_01074"/>
    </source>
</evidence>
<name>Y1111_GEODF</name>
<keyword id="KW-0533">Nickel</keyword>
<keyword id="KW-1185">Reference proteome</keyword>
<protein>
    <recommendedName>
        <fullName evidence="1">Putative nickel insertion protein</fullName>
    </recommendedName>
</protein>
<proteinExistence type="inferred from homology"/>
<feature type="chain" id="PRO_1000149769" description="Putative nickel insertion protein">
    <location>
        <begin position="1"/>
        <end position="390"/>
    </location>
</feature>
<reference key="1">
    <citation type="submission" date="2009-01" db="EMBL/GenBank/DDBJ databases">
        <title>Complete sequence of Geobacter sp. FRC-32.</title>
        <authorList>
            <consortium name="US DOE Joint Genome Institute"/>
            <person name="Lucas S."/>
            <person name="Copeland A."/>
            <person name="Lapidus A."/>
            <person name="Glavina del Rio T."/>
            <person name="Dalin E."/>
            <person name="Tice H."/>
            <person name="Bruce D."/>
            <person name="Goodwin L."/>
            <person name="Pitluck S."/>
            <person name="Saunders E."/>
            <person name="Brettin T."/>
            <person name="Detter J.C."/>
            <person name="Han C."/>
            <person name="Larimer F."/>
            <person name="Land M."/>
            <person name="Hauser L."/>
            <person name="Kyrpides N."/>
            <person name="Ovchinnikova G."/>
            <person name="Kostka J."/>
            <person name="Richardson P."/>
        </authorList>
    </citation>
    <scope>NUCLEOTIDE SEQUENCE [LARGE SCALE GENOMIC DNA]</scope>
    <source>
        <strain>DSM 22248 / JCM 15807 / FRC-32</strain>
    </source>
</reference>
<gene>
    <name type="ordered locus">Geob_1111</name>
</gene>